<reference key="1">
    <citation type="journal article" date="2007" name="Proc. Natl. Acad. Sci. U.S.A.">
        <title>Deep-sea vent epsilon-proteobacterial genomes provide insights into emergence of pathogens.</title>
        <authorList>
            <person name="Nakagawa S."/>
            <person name="Takaki Y."/>
            <person name="Shimamura S."/>
            <person name="Reysenbach A.-L."/>
            <person name="Takai K."/>
            <person name="Horikoshi K."/>
        </authorList>
    </citation>
    <scope>NUCLEOTIDE SEQUENCE [LARGE SCALE GENOMIC DNA]</scope>
    <source>
        <strain>SB155-2</strain>
    </source>
</reference>
<sequence length="158" mass="17629">MNILGIDPGSRNLGYAIVELNNSHMKLIEAGLVKIKPSEFQYQLSQMIEGLDMVFSSHSVDEVAMEDIFYAYNPQTVLKLAQFRGALALRIIQLHGNFSAYTPLQVKKALTGKAKASKEQVAFMVKKILGIKKEVKPLDITDAMAVAITHAQRLRLKR</sequence>
<gene>
    <name evidence="1" type="primary">ruvC</name>
    <name type="ordered locus">NIS_1857</name>
</gene>
<evidence type="ECO:0000255" key="1">
    <source>
        <dbReference type="HAMAP-Rule" id="MF_00034"/>
    </source>
</evidence>
<feature type="chain" id="PRO_1000002783" description="Crossover junction endodeoxyribonuclease RuvC">
    <location>
        <begin position="1"/>
        <end position="158"/>
    </location>
</feature>
<feature type="active site" evidence="1">
    <location>
        <position position="7"/>
    </location>
</feature>
<feature type="active site" evidence="1">
    <location>
        <position position="66"/>
    </location>
</feature>
<feature type="active site" evidence="1">
    <location>
        <position position="139"/>
    </location>
</feature>
<feature type="binding site" evidence="1">
    <location>
        <position position="7"/>
    </location>
    <ligand>
        <name>Mg(2+)</name>
        <dbReference type="ChEBI" id="CHEBI:18420"/>
        <label>1</label>
    </ligand>
</feature>
<feature type="binding site" evidence="1">
    <location>
        <position position="66"/>
    </location>
    <ligand>
        <name>Mg(2+)</name>
        <dbReference type="ChEBI" id="CHEBI:18420"/>
        <label>2</label>
    </ligand>
</feature>
<feature type="binding site" evidence="1">
    <location>
        <position position="139"/>
    </location>
    <ligand>
        <name>Mg(2+)</name>
        <dbReference type="ChEBI" id="CHEBI:18420"/>
        <label>1</label>
    </ligand>
</feature>
<comment type="function">
    <text evidence="1">The RuvA-RuvB-RuvC complex processes Holliday junction (HJ) DNA during genetic recombination and DNA repair. Endonuclease that resolves HJ intermediates. Cleaves cruciform DNA by making single-stranded nicks across the HJ at symmetrical positions within the homologous arms, yielding a 5'-phosphate and a 3'-hydroxyl group; requires a central core of homology in the junction. The consensus cleavage sequence is 5'-(A/T)TT(C/G)-3'. Cleavage occurs on the 3'-side of the TT dinucleotide at the point of strand exchange. HJ branch migration catalyzed by RuvA-RuvB allows RuvC to scan DNA until it finds its consensus sequence, where it cleaves and resolves the cruciform DNA.</text>
</comment>
<comment type="catalytic activity">
    <reaction evidence="1">
        <text>Endonucleolytic cleavage at a junction such as a reciprocal single-stranded crossover between two homologous DNA duplexes (Holliday junction).</text>
        <dbReference type="EC" id="3.1.21.10"/>
    </reaction>
</comment>
<comment type="cofactor">
    <cofactor evidence="1">
        <name>Mg(2+)</name>
        <dbReference type="ChEBI" id="CHEBI:18420"/>
    </cofactor>
    <text evidence="1">Binds 2 Mg(2+) ion per subunit.</text>
</comment>
<comment type="subunit">
    <text evidence="1">Homodimer which binds Holliday junction (HJ) DNA. The HJ becomes 2-fold symmetrical on binding to RuvC with unstacked arms; it has a different conformation from HJ DNA in complex with RuvA. In the full resolvosome a probable DNA-RuvA(4)-RuvB(12)-RuvC(2) complex forms which resolves the HJ.</text>
</comment>
<comment type="subcellular location">
    <subcellularLocation>
        <location evidence="1">Cytoplasm</location>
    </subcellularLocation>
</comment>
<comment type="similarity">
    <text evidence="1">Belongs to the RuvC family.</text>
</comment>
<dbReference type="EC" id="3.1.21.10" evidence="1"/>
<dbReference type="EMBL" id="AP009178">
    <property type="protein sequence ID" value="BAF70961.1"/>
    <property type="molecule type" value="Genomic_DNA"/>
</dbReference>
<dbReference type="RefSeq" id="WP_012083224.1">
    <property type="nucleotide sequence ID" value="NC_009662.1"/>
</dbReference>
<dbReference type="SMR" id="A6Q652"/>
<dbReference type="FunCoup" id="A6Q652">
    <property type="interactions" value="191"/>
</dbReference>
<dbReference type="STRING" id="387092.NIS_1857"/>
<dbReference type="KEGG" id="nis:NIS_1857"/>
<dbReference type="eggNOG" id="COG0817">
    <property type="taxonomic scope" value="Bacteria"/>
</dbReference>
<dbReference type="HOGENOM" id="CLU_091257_3_0_7"/>
<dbReference type="InParanoid" id="A6Q652"/>
<dbReference type="OrthoDB" id="9805499at2"/>
<dbReference type="Proteomes" id="UP000001118">
    <property type="component" value="Chromosome"/>
</dbReference>
<dbReference type="GO" id="GO:0005737">
    <property type="term" value="C:cytoplasm"/>
    <property type="evidence" value="ECO:0007669"/>
    <property type="project" value="UniProtKB-SubCell"/>
</dbReference>
<dbReference type="GO" id="GO:0048476">
    <property type="term" value="C:Holliday junction resolvase complex"/>
    <property type="evidence" value="ECO:0007669"/>
    <property type="project" value="UniProtKB-UniRule"/>
</dbReference>
<dbReference type="GO" id="GO:0008821">
    <property type="term" value="F:crossover junction DNA endonuclease activity"/>
    <property type="evidence" value="ECO:0007669"/>
    <property type="project" value="UniProtKB-UniRule"/>
</dbReference>
<dbReference type="GO" id="GO:0003677">
    <property type="term" value="F:DNA binding"/>
    <property type="evidence" value="ECO:0007669"/>
    <property type="project" value="UniProtKB-KW"/>
</dbReference>
<dbReference type="GO" id="GO:0000287">
    <property type="term" value="F:magnesium ion binding"/>
    <property type="evidence" value="ECO:0007669"/>
    <property type="project" value="UniProtKB-UniRule"/>
</dbReference>
<dbReference type="GO" id="GO:0006310">
    <property type="term" value="P:DNA recombination"/>
    <property type="evidence" value="ECO:0007669"/>
    <property type="project" value="UniProtKB-UniRule"/>
</dbReference>
<dbReference type="GO" id="GO:0006281">
    <property type="term" value="P:DNA repair"/>
    <property type="evidence" value="ECO:0007669"/>
    <property type="project" value="UniProtKB-UniRule"/>
</dbReference>
<dbReference type="CDD" id="cd16962">
    <property type="entry name" value="RuvC"/>
    <property type="match status" value="1"/>
</dbReference>
<dbReference type="FunFam" id="3.30.420.10:FF:000002">
    <property type="entry name" value="Crossover junction endodeoxyribonuclease RuvC"/>
    <property type="match status" value="1"/>
</dbReference>
<dbReference type="Gene3D" id="3.30.420.10">
    <property type="entry name" value="Ribonuclease H-like superfamily/Ribonuclease H"/>
    <property type="match status" value="1"/>
</dbReference>
<dbReference type="HAMAP" id="MF_00034">
    <property type="entry name" value="RuvC"/>
    <property type="match status" value="1"/>
</dbReference>
<dbReference type="InterPro" id="IPR012337">
    <property type="entry name" value="RNaseH-like_sf"/>
</dbReference>
<dbReference type="InterPro" id="IPR036397">
    <property type="entry name" value="RNaseH_sf"/>
</dbReference>
<dbReference type="InterPro" id="IPR020563">
    <property type="entry name" value="X-over_junc_endoDNase_Mg_BS"/>
</dbReference>
<dbReference type="InterPro" id="IPR002176">
    <property type="entry name" value="X-over_junc_endoDNase_RuvC"/>
</dbReference>
<dbReference type="NCBIfam" id="TIGR00228">
    <property type="entry name" value="ruvC"/>
    <property type="match status" value="1"/>
</dbReference>
<dbReference type="PANTHER" id="PTHR30194">
    <property type="entry name" value="CROSSOVER JUNCTION ENDODEOXYRIBONUCLEASE RUVC"/>
    <property type="match status" value="1"/>
</dbReference>
<dbReference type="PANTHER" id="PTHR30194:SF3">
    <property type="entry name" value="CROSSOVER JUNCTION ENDODEOXYRIBONUCLEASE RUVC"/>
    <property type="match status" value="1"/>
</dbReference>
<dbReference type="Pfam" id="PF02075">
    <property type="entry name" value="RuvC"/>
    <property type="match status" value="1"/>
</dbReference>
<dbReference type="PRINTS" id="PR00696">
    <property type="entry name" value="RSOLVASERUVC"/>
</dbReference>
<dbReference type="SUPFAM" id="SSF53098">
    <property type="entry name" value="Ribonuclease H-like"/>
    <property type="match status" value="1"/>
</dbReference>
<dbReference type="PROSITE" id="PS01321">
    <property type="entry name" value="RUVC"/>
    <property type="match status" value="1"/>
</dbReference>
<organism>
    <name type="scientific">Nitratiruptor sp. (strain SB155-2)</name>
    <dbReference type="NCBI Taxonomy" id="387092"/>
    <lineage>
        <taxon>Bacteria</taxon>
        <taxon>Pseudomonadati</taxon>
        <taxon>Campylobacterota</taxon>
        <taxon>Epsilonproteobacteria</taxon>
        <taxon>Nautiliales</taxon>
        <taxon>Nitratiruptoraceae</taxon>
        <taxon>Nitratiruptor</taxon>
    </lineage>
</organism>
<keyword id="KW-0963">Cytoplasm</keyword>
<keyword id="KW-0227">DNA damage</keyword>
<keyword id="KW-0233">DNA recombination</keyword>
<keyword id="KW-0234">DNA repair</keyword>
<keyword id="KW-0238">DNA-binding</keyword>
<keyword id="KW-0255">Endonuclease</keyword>
<keyword id="KW-0378">Hydrolase</keyword>
<keyword id="KW-0460">Magnesium</keyword>
<keyword id="KW-0479">Metal-binding</keyword>
<keyword id="KW-0540">Nuclease</keyword>
<keyword id="KW-1185">Reference proteome</keyword>
<protein>
    <recommendedName>
        <fullName evidence="1">Crossover junction endodeoxyribonuclease RuvC</fullName>
        <ecNumber evidence="1">3.1.21.10</ecNumber>
    </recommendedName>
    <alternativeName>
        <fullName evidence="1">Holliday junction nuclease RuvC</fullName>
    </alternativeName>
    <alternativeName>
        <fullName evidence="1">Holliday junction resolvase RuvC</fullName>
    </alternativeName>
</protein>
<proteinExistence type="inferred from homology"/>
<accession>A6Q652</accession>
<name>RUVC_NITSB</name>